<accession>Q8NP72</accession>
<comment type="function">
    <text evidence="1">Catalyzes the transfer of a dimethylallyl group onto the adenine at position 37 in tRNAs that read codons beginning with uridine, leading to the formation of N6-(dimethylallyl)adenosine (i(6)A).</text>
</comment>
<comment type="catalytic activity">
    <reaction evidence="1">
        <text>adenosine(37) in tRNA + dimethylallyl diphosphate = N(6)-dimethylallyladenosine(37) in tRNA + diphosphate</text>
        <dbReference type="Rhea" id="RHEA:26482"/>
        <dbReference type="Rhea" id="RHEA-COMP:10162"/>
        <dbReference type="Rhea" id="RHEA-COMP:10375"/>
        <dbReference type="ChEBI" id="CHEBI:33019"/>
        <dbReference type="ChEBI" id="CHEBI:57623"/>
        <dbReference type="ChEBI" id="CHEBI:74411"/>
        <dbReference type="ChEBI" id="CHEBI:74415"/>
        <dbReference type="EC" id="2.5.1.75"/>
    </reaction>
</comment>
<comment type="cofactor">
    <cofactor evidence="1">
        <name>Mg(2+)</name>
        <dbReference type="ChEBI" id="CHEBI:18420"/>
    </cofactor>
</comment>
<comment type="subunit">
    <text evidence="1">Monomer.</text>
</comment>
<comment type="similarity">
    <text evidence="1">Belongs to the IPP transferase family.</text>
</comment>
<keyword id="KW-0067">ATP-binding</keyword>
<keyword id="KW-0460">Magnesium</keyword>
<keyword id="KW-0547">Nucleotide-binding</keyword>
<keyword id="KW-1185">Reference proteome</keyword>
<keyword id="KW-0808">Transferase</keyword>
<keyword id="KW-0819">tRNA processing</keyword>
<organism>
    <name type="scientific">Corynebacterium glutamicum (strain ATCC 13032 / DSM 20300 / JCM 1318 / BCRC 11384 / CCUG 27702 / LMG 3730 / NBRC 12168 / NCIMB 10025 / NRRL B-2784 / 534)</name>
    <dbReference type="NCBI Taxonomy" id="196627"/>
    <lineage>
        <taxon>Bacteria</taxon>
        <taxon>Bacillati</taxon>
        <taxon>Actinomycetota</taxon>
        <taxon>Actinomycetes</taxon>
        <taxon>Mycobacteriales</taxon>
        <taxon>Corynebacteriaceae</taxon>
        <taxon>Corynebacterium</taxon>
    </lineage>
</organism>
<proteinExistence type="inferred from homology"/>
<name>MIAA_CORGL</name>
<evidence type="ECO:0000255" key="1">
    <source>
        <dbReference type="HAMAP-Rule" id="MF_00185"/>
    </source>
</evidence>
<protein>
    <recommendedName>
        <fullName evidence="1">tRNA dimethylallyltransferase</fullName>
        <ecNumber evidence="1">2.5.1.75</ecNumber>
    </recommendedName>
    <alternativeName>
        <fullName evidence="1">Dimethylallyl diphosphate:tRNA dimethylallyltransferase</fullName>
        <shortName evidence="1">DMAPP:tRNA dimethylallyltransferase</shortName>
        <shortName evidence="1">DMATase</shortName>
    </alternativeName>
    <alternativeName>
        <fullName evidence="1">Isopentenyl-diphosphate:tRNA isopentenyltransferase</fullName>
        <shortName evidence="1">IPP transferase</shortName>
        <shortName evidence="1">IPPT</shortName>
        <shortName evidence="1">IPTase</shortName>
    </alternativeName>
</protein>
<sequence>MVTPIAVVGPTASGKSALGIALAHKLDGEVVNVDSMQLYKGMDIGTAKLTVEEREGIAHHQLDVWDVTETASVARFQSDAVADVEDIMSRGKTPILVGGSMLYVQSLVDDWQFPPTDSAVRARFEARLADIGVEALHAELTQLDPEAAAVIESNDPRRTVRALEVIELTGQPFQASQPPKDAPPRWGTRIIGLKTTPEWLNPRIEQRTARMFEQGFVAEVEHLVQQGLIADSTAGRAIGYSQVLAAMAGEMTWEDAFERTVTGTRRYVRRQRSWFNRDHRVSWVDASGDPTAQALEILGLQ</sequence>
<gene>
    <name evidence="1" type="primary">miaA</name>
    <name type="ordered locus">Cgl1944</name>
    <name type="ordered locus">cg2130</name>
</gene>
<reference key="1">
    <citation type="journal article" date="2003" name="Appl. Microbiol. Biotechnol.">
        <title>The Corynebacterium glutamicum genome: features and impacts on biotechnological processes.</title>
        <authorList>
            <person name="Ikeda M."/>
            <person name="Nakagawa S."/>
        </authorList>
    </citation>
    <scope>NUCLEOTIDE SEQUENCE [LARGE SCALE GENOMIC DNA]</scope>
    <source>
        <strain>ATCC 13032 / DSM 20300 / JCM 1318 / BCRC 11384 / CCUG 27702 / LMG 3730 / NBRC 12168 / NCIMB 10025 / NRRL B-2784 / 534</strain>
    </source>
</reference>
<reference key="2">
    <citation type="journal article" date="2003" name="J. Biotechnol.">
        <title>The complete Corynebacterium glutamicum ATCC 13032 genome sequence and its impact on the production of L-aspartate-derived amino acids and vitamins.</title>
        <authorList>
            <person name="Kalinowski J."/>
            <person name="Bathe B."/>
            <person name="Bartels D."/>
            <person name="Bischoff N."/>
            <person name="Bott M."/>
            <person name="Burkovski A."/>
            <person name="Dusch N."/>
            <person name="Eggeling L."/>
            <person name="Eikmanns B.J."/>
            <person name="Gaigalat L."/>
            <person name="Goesmann A."/>
            <person name="Hartmann M."/>
            <person name="Huthmacher K."/>
            <person name="Kraemer R."/>
            <person name="Linke B."/>
            <person name="McHardy A.C."/>
            <person name="Meyer F."/>
            <person name="Moeckel B."/>
            <person name="Pfefferle W."/>
            <person name="Puehler A."/>
            <person name="Rey D.A."/>
            <person name="Rueckert C."/>
            <person name="Rupp O."/>
            <person name="Sahm H."/>
            <person name="Wendisch V.F."/>
            <person name="Wiegraebe I."/>
            <person name="Tauch A."/>
        </authorList>
    </citation>
    <scope>NUCLEOTIDE SEQUENCE [LARGE SCALE GENOMIC DNA]</scope>
    <source>
        <strain>ATCC 13032 / DSM 20300 / JCM 1318 / BCRC 11384 / CCUG 27702 / LMG 3730 / NBRC 12168 / NCIMB 10025 / NRRL B-2784 / 534</strain>
    </source>
</reference>
<dbReference type="EC" id="2.5.1.75" evidence="1"/>
<dbReference type="EMBL" id="BA000036">
    <property type="protein sequence ID" value="BAB99337.1"/>
    <property type="molecule type" value="Genomic_DNA"/>
</dbReference>
<dbReference type="EMBL" id="BX927153">
    <property type="protein sequence ID" value="CAF20285.1"/>
    <property type="molecule type" value="Genomic_DNA"/>
</dbReference>
<dbReference type="RefSeq" id="NP_601151.1">
    <property type="nucleotide sequence ID" value="NC_003450.3"/>
</dbReference>
<dbReference type="RefSeq" id="WP_011014773.1">
    <property type="nucleotide sequence ID" value="NC_006958.1"/>
</dbReference>
<dbReference type="SMR" id="Q8NP72"/>
<dbReference type="STRING" id="196627.cg2130"/>
<dbReference type="GeneID" id="1019901"/>
<dbReference type="KEGG" id="cgb:cg2130"/>
<dbReference type="KEGG" id="cgl:Cgl1944"/>
<dbReference type="PATRIC" id="fig|196627.13.peg.1882"/>
<dbReference type="eggNOG" id="COG0324">
    <property type="taxonomic scope" value="Bacteria"/>
</dbReference>
<dbReference type="HOGENOM" id="CLU_032616_0_1_11"/>
<dbReference type="OrthoDB" id="9776390at2"/>
<dbReference type="BioCyc" id="CORYNE:G18NG-11536-MONOMER"/>
<dbReference type="Proteomes" id="UP000000582">
    <property type="component" value="Chromosome"/>
</dbReference>
<dbReference type="Proteomes" id="UP000001009">
    <property type="component" value="Chromosome"/>
</dbReference>
<dbReference type="GO" id="GO:0005524">
    <property type="term" value="F:ATP binding"/>
    <property type="evidence" value="ECO:0007669"/>
    <property type="project" value="UniProtKB-UniRule"/>
</dbReference>
<dbReference type="GO" id="GO:0052381">
    <property type="term" value="F:tRNA dimethylallyltransferase activity"/>
    <property type="evidence" value="ECO:0007669"/>
    <property type="project" value="UniProtKB-UniRule"/>
</dbReference>
<dbReference type="GO" id="GO:0006400">
    <property type="term" value="P:tRNA modification"/>
    <property type="evidence" value="ECO:0007669"/>
    <property type="project" value="TreeGrafter"/>
</dbReference>
<dbReference type="FunFam" id="1.10.20.140:FF:000001">
    <property type="entry name" value="tRNA dimethylallyltransferase"/>
    <property type="match status" value="1"/>
</dbReference>
<dbReference type="Gene3D" id="1.10.20.140">
    <property type="match status" value="1"/>
</dbReference>
<dbReference type="Gene3D" id="3.40.50.300">
    <property type="entry name" value="P-loop containing nucleotide triphosphate hydrolases"/>
    <property type="match status" value="1"/>
</dbReference>
<dbReference type="HAMAP" id="MF_00185">
    <property type="entry name" value="IPP_trans"/>
    <property type="match status" value="1"/>
</dbReference>
<dbReference type="InterPro" id="IPR039657">
    <property type="entry name" value="Dimethylallyltransferase"/>
</dbReference>
<dbReference type="InterPro" id="IPR018022">
    <property type="entry name" value="IPT"/>
</dbReference>
<dbReference type="InterPro" id="IPR027417">
    <property type="entry name" value="P-loop_NTPase"/>
</dbReference>
<dbReference type="NCBIfam" id="TIGR00174">
    <property type="entry name" value="miaA"/>
    <property type="match status" value="1"/>
</dbReference>
<dbReference type="PANTHER" id="PTHR11088">
    <property type="entry name" value="TRNA DIMETHYLALLYLTRANSFERASE"/>
    <property type="match status" value="1"/>
</dbReference>
<dbReference type="PANTHER" id="PTHR11088:SF60">
    <property type="entry name" value="TRNA DIMETHYLALLYLTRANSFERASE"/>
    <property type="match status" value="1"/>
</dbReference>
<dbReference type="Pfam" id="PF01715">
    <property type="entry name" value="IPPT"/>
    <property type="match status" value="1"/>
</dbReference>
<dbReference type="SUPFAM" id="SSF52540">
    <property type="entry name" value="P-loop containing nucleoside triphosphate hydrolases"/>
    <property type="match status" value="1"/>
</dbReference>
<feature type="chain" id="PRO_0000163908" description="tRNA dimethylallyltransferase">
    <location>
        <begin position="1"/>
        <end position="301"/>
    </location>
</feature>
<feature type="region of interest" description="Interaction with substrate tRNA" evidence="1">
    <location>
        <begin position="34"/>
        <end position="37"/>
    </location>
</feature>
<feature type="binding site" evidence="1">
    <location>
        <begin position="9"/>
        <end position="16"/>
    </location>
    <ligand>
        <name>ATP</name>
        <dbReference type="ChEBI" id="CHEBI:30616"/>
    </ligand>
</feature>
<feature type="binding site" evidence="1">
    <location>
        <begin position="11"/>
        <end position="16"/>
    </location>
    <ligand>
        <name>substrate</name>
    </ligand>
</feature>
<feature type="site" description="Interaction with substrate tRNA" evidence="1">
    <location>
        <position position="100"/>
    </location>
</feature>
<feature type="site" description="Interaction with substrate tRNA" evidence="1">
    <location>
        <position position="121"/>
    </location>
</feature>